<gene>
    <name evidence="1" type="primary">murG</name>
    <name type="ordered locus">APJL_0019</name>
</gene>
<sequence length="351" mass="37594">MAKKLLVMAGGTGGHVFPAIAVARELQKQGWEIRWLGTKDRMEADLVPKHGIPIEFIQISGLKGKGIGALLKAPFAIFKAVMQARKIIKNYQPDAVLGMGGYVSGPGGIAAKLCGVPVILHEQNAVAGLTNVWLSKIACRVLQAFPTAFPNAEVVGNPVREDLAQLEAPEIRFAERGYPINILVMGGSQGARVINQTVPEVAKQLGNNVFISHQVGKGNLGGVEEIYQATGNGIAAEFIDDMAQAYSWADLVICRSGALTVCEIAAAGLPAIFVPYQHKDRQQYLNATYLADGGAAIIIEQQDFTPQTLLNVLQPLIADRRKLTEMAVKARAKATPTAAQRVAEVIIEQAK</sequence>
<dbReference type="EC" id="2.4.1.227" evidence="1"/>
<dbReference type="EMBL" id="CP000687">
    <property type="protein sequence ID" value="ABY68625.1"/>
    <property type="molecule type" value="Genomic_DNA"/>
</dbReference>
<dbReference type="RefSeq" id="WP_005618675.1">
    <property type="nucleotide sequence ID" value="NC_010278.1"/>
</dbReference>
<dbReference type="SMR" id="B0BRH7"/>
<dbReference type="CAZy" id="GT28">
    <property type="family name" value="Glycosyltransferase Family 28"/>
</dbReference>
<dbReference type="KEGG" id="apj:APJL_0019"/>
<dbReference type="HOGENOM" id="CLU_037404_2_0_6"/>
<dbReference type="UniPathway" id="UPA00219"/>
<dbReference type="Proteomes" id="UP000008547">
    <property type="component" value="Chromosome"/>
</dbReference>
<dbReference type="GO" id="GO:0005886">
    <property type="term" value="C:plasma membrane"/>
    <property type="evidence" value="ECO:0007669"/>
    <property type="project" value="UniProtKB-SubCell"/>
</dbReference>
<dbReference type="GO" id="GO:0051991">
    <property type="term" value="F:UDP-N-acetyl-D-glucosamine:N-acetylmuramoyl-L-alanyl-D-glutamyl-meso-2,6-diaminopimelyl-D-alanyl-D-alanine-diphosphoundecaprenol 4-beta-N-acetylglucosaminlytransferase activity"/>
    <property type="evidence" value="ECO:0007669"/>
    <property type="project" value="RHEA"/>
</dbReference>
<dbReference type="GO" id="GO:0050511">
    <property type="term" value="F:undecaprenyldiphospho-muramoylpentapeptide beta-N-acetylglucosaminyltransferase activity"/>
    <property type="evidence" value="ECO:0007669"/>
    <property type="project" value="UniProtKB-UniRule"/>
</dbReference>
<dbReference type="GO" id="GO:0005975">
    <property type="term" value="P:carbohydrate metabolic process"/>
    <property type="evidence" value="ECO:0007669"/>
    <property type="project" value="InterPro"/>
</dbReference>
<dbReference type="GO" id="GO:0051301">
    <property type="term" value="P:cell division"/>
    <property type="evidence" value="ECO:0007669"/>
    <property type="project" value="UniProtKB-KW"/>
</dbReference>
<dbReference type="GO" id="GO:0071555">
    <property type="term" value="P:cell wall organization"/>
    <property type="evidence" value="ECO:0007669"/>
    <property type="project" value="UniProtKB-KW"/>
</dbReference>
<dbReference type="GO" id="GO:0030259">
    <property type="term" value="P:lipid glycosylation"/>
    <property type="evidence" value="ECO:0007669"/>
    <property type="project" value="UniProtKB-UniRule"/>
</dbReference>
<dbReference type="GO" id="GO:0009252">
    <property type="term" value="P:peptidoglycan biosynthetic process"/>
    <property type="evidence" value="ECO:0007669"/>
    <property type="project" value="UniProtKB-UniRule"/>
</dbReference>
<dbReference type="GO" id="GO:0008360">
    <property type="term" value="P:regulation of cell shape"/>
    <property type="evidence" value="ECO:0007669"/>
    <property type="project" value="UniProtKB-KW"/>
</dbReference>
<dbReference type="CDD" id="cd03785">
    <property type="entry name" value="GT28_MurG"/>
    <property type="match status" value="1"/>
</dbReference>
<dbReference type="Gene3D" id="3.40.50.2000">
    <property type="entry name" value="Glycogen Phosphorylase B"/>
    <property type="match status" value="2"/>
</dbReference>
<dbReference type="HAMAP" id="MF_00033">
    <property type="entry name" value="MurG"/>
    <property type="match status" value="1"/>
</dbReference>
<dbReference type="InterPro" id="IPR006009">
    <property type="entry name" value="GlcNAc_MurG"/>
</dbReference>
<dbReference type="InterPro" id="IPR007235">
    <property type="entry name" value="Glyco_trans_28_C"/>
</dbReference>
<dbReference type="InterPro" id="IPR004276">
    <property type="entry name" value="GlycoTrans_28_N"/>
</dbReference>
<dbReference type="NCBIfam" id="TIGR01133">
    <property type="entry name" value="murG"/>
    <property type="match status" value="1"/>
</dbReference>
<dbReference type="PANTHER" id="PTHR21015:SF22">
    <property type="entry name" value="GLYCOSYLTRANSFERASE"/>
    <property type="match status" value="1"/>
</dbReference>
<dbReference type="PANTHER" id="PTHR21015">
    <property type="entry name" value="UDP-N-ACETYLGLUCOSAMINE--N-ACETYLMURAMYL-(PENTAPEPTIDE) PYROPHOSPHORYL-UNDECAPRENOL N-ACETYLGLUCOSAMINE TRANSFERASE 1"/>
    <property type="match status" value="1"/>
</dbReference>
<dbReference type="Pfam" id="PF04101">
    <property type="entry name" value="Glyco_tran_28_C"/>
    <property type="match status" value="1"/>
</dbReference>
<dbReference type="Pfam" id="PF03033">
    <property type="entry name" value="Glyco_transf_28"/>
    <property type="match status" value="1"/>
</dbReference>
<dbReference type="SUPFAM" id="SSF53756">
    <property type="entry name" value="UDP-Glycosyltransferase/glycogen phosphorylase"/>
    <property type="match status" value="1"/>
</dbReference>
<evidence type="ECO:0000255" key="1">
    <source>
        <dbReference type="HAMAP-Rule" id="MF_00033"/>
    </source>
</evidence>
<feature type="chain" id="PRO_1000090401" description="UDP-N-acetylglucosamine--N-acetylmuramyl-(pentapeptide) pyrophosphoryl-undecaprenol N-acetylglucosamine transferase">
    <location>
        <begin position="1"/>
        <end position="351"/>
    </location>
</feature>
<feature type="binding site" evidence="1">
    <location>
        <begin position="12"/>
        <end position="14"/>
    </location>
    <ligand>
        <name>UDP-N-acetyl-alpha-D-glucosamine</name>
        <dbReference type="ChEBI" id="CHEBI:57705"/>
    </ligand>
</feature>
<feature type="binding site" evidence="1">
    <location>
        <position position="124"/>
    </location>
    <ligand>
        <name>UDP-N-acetyl-alpha-D-glucosamine</name>
        <dbReference type="ChEBI" id="CHEBI:57705"/>
    </ligand>
</feature>
<feature type="binding site" evidence="1">
    <location>
        <position position="160"/>
    </location>
    <ligand>
        <name>UDP-N-acetyl-alpha-D-glucosamine</name>
        <dbReference type="ChEBI" id="CHEBI:57705"/>
    </ligand>
</feature>
<feature type="binding site" evidence="1">
    <location>
        <position position="188"/>
    </location>
    <ligand>
        <name>UDP-N-acetyl-alpha-D-glucosamine</name>
        <dbReference type="ChEBI" id="CHEBI:57705"/>
    </ligand>
</feature>
<feature type="binding site" evidence="1">
    <location>
        <position position="239"/>
    </location>
    <ligand>
        <name>UDP-N-acetyl-alpha-D-glucosamine</name>
        <dbReference type="ChEBI" id="CHEBI:57705"/>
    </ligand>
</feature>
<feature type="binding site" evidence="1">
    <location>
        <begin position="258"/>
        <end position="263"/>
    </location>
    <ligand>
        <name>UDP-N-acetyl-alpha-D-glucosamine</name>
        <dbReference type="ChEBI" id="CHEBI:57705"/>
    </ligand>
</feature>
<feature type="binding site" evidence="1">
    <location>
        <position position="283"/>
    </location>
    <ligand>
        <name>UDP-N-acetyl-alpha-D-glucosamine</name>
        <dbReference type="ChEBI" id="CHEBI:57705"/>
    </ligand>
</feature>
<accession>B0BRH7</accession>
<organism>
    <name type="scientific">Actinobacillus pleuropneumoniae serotype 3 (strain JL03)</name>
    <dbReference type="NCBI Taxonomy" id="434271"/>
    <lineage>
        <taxon>Bacteria</taxon>
        <taxon>Pseudomonadati</taxon>
        <taxon>Pseudomonadota</taxon>
        <taxon>Gammaproteobacteria</taxon>
        <taxon>Pasteurellales</taxon>
        <taxon>Pasteurellaceae</taxon>
        <taxon>Actinobacillus</taxon>
    </lineage>
</organism>
<proteinExistence type="inferred from homology"/>
<protein>
    <recommendedName>
        <fullName evidence="1">UDP-N-acetylglucosamine--N-acetylmuramyl-(pentapeptide) pyrophosphoryl-undecaprenol N-acetylglucosamine transferase</fullName>
        <ecNumber evidence="1">2.4.1.227</ecNumber>
    </recommendedName>
    <alternativeName>
        <fullName evidence="1">Undecaprenyl-PP-MurNAc-pentapeptide-UDPGlcNAc GlcNAc transferase</fullName>
    </alternativeName>
</protein>
<reference key="1">
    <citation type="journal article" date="2008" name="PLoS ONE">
        <title>Genome biology of Actinobacillus pleuropneumoniae JL03, an isolate of serotype 3 prevalent in China.</title>
        <authorList>
            <person name="Xu Z."/>
            <person name="Zhou Y."/>
            <person name="Li L."/>
            <person name="Zhou R."/>
            <person name="Xiao S."/>
            <person name="Wan Y."/>
            <person name="Zhang S."/>
            <person name="Wang K."/>
            <person name="Li W."/>
            <person name="Li L."/>
            <person name="Jin H."/>
            <person name="Kang M."/>
            <person name="Dalai B."/>
            <person name="Li T."/>
            <person name="Liu L."/>
            <person name="Cheng Y."/>
            <person name="Zhang L."/>
            <person name="Xu T."/>
            <person name="Zheng H."/>
            <person name="Pu S."/>
            <person name="Wang B."/>
            <person name="Gu W."/>
            <person name="Zhang X.L."/>
            <person name="Zhu G.-F."/>
            <person name="Wang S."/>
            <person name="Zhao G.-P."/>
            <person name="Chen H."/>
        </authorList>
    </citation>
    <scope>NUCLEOTIDE SEQUENCE [LARGE SCALE GENOMIC DNA]</scope>
    <source>
        <strain>JL03</strain>
    </source>
</reference>
<comment type="function">
    <text evidence="1">Cell wall formation. Catalyzes the transfer of a GlcNAc subunit on undecaprenyl-pyrophosphoryl-MurNAc-pentapeptide (lipid intermediate I) to form undecaprenyl-pyrophosphoryl-MurNAc-(pentapeptide)GlcNAc (lipid intermediate II).</text>
</comment>
<comment type="catalytic activity">
    <reaction evidence="1">
        <text>di-trans,octa-cis-undecaprenyl diphospho-N-acetyl-alpha-D-muramoyl-L-alanyl-D-glutamyl-meso-2,6-diaminopimeloyl-D-alanyl-D-alanine + UDP-N-acetyl-alpha-D-glucosamine = di-trans,octa-cis-undecaprenyl diphospho-[N-acetyl-alpha-D-glucosaminyl-(1-&gt;4)]-N-acetyl-alpha-D-muramoyl-L-alanyl-D-glutamyl-meso-2,6-diaminopimeloyl-D-alanyl-D-alanine + UDP + H(+)</text>
        <dbReference type="Rhea" id="RHEA:31227"/>
        <dbReference type="ChEBI" id="CHEBI:15378"/>
        <dbReference type="ChEBI" id="CHEBI:57705"/>
        <dbReference type="ChEBI" id="CHEBI:58223"/>
        <dbReference type="ChEBI" id="CHEBI:61387"/>
        <dbReference type="ChEBI" id="CHEBI:61388"/>
        <dbReference type="EC" id="2.4.1.227"/>
    </reaction>
</comment>
<comment type="pathway">
    <text evidence="1">Cell wall biogenesis; peptidoglycan biosynthesis.</text>
</comment>
<comment type="subcellular location">
    <subcellularLocation>
        <location evidence="1">Cell inner membrane</location>
        <topology evidence="1">Peripheral membrane protein</topology>
        <orientation evidence="1">Cytoplasmic side</orientation>
    </subcellularLocation>
</comment>
<comment type="similarity">
    <text evidence="1">Belongs to the glycosyltransferase 28 family. MurG subfamily.</text>
</comment>
<keyword id="KW-0131">Cell cycle</keyword>
<keyword id="KW-0132">Cell division</keyword>
<keyword id="KW-0997">Cell inner membrane</keyword>
<keyword id="KW-1003">Cell membrane</keyword>
<keyword id="KW-0133">Cell shape</keyword>
<keyword id="KW-0961">Cell wall biogenesis/degradation</keyword>
<keyword id="KW-0328">Glycosyltransferase</keyword>
<keyword id="KW-0472">Membrane</keyword>
<keyword id="KW-0573">Peptidoglycan synthesis</keyword>
<keyword id="KW-0808">Transferase</keyword>
<name>MURG_ACTPJ</name>